<sequence>MSHLTTFLVFFLLAFVTYTYASGVFEVHNNCPYTVWAAATPVGGGRRLERGQSWWFWAPPGTKMARIWGRTNCNFDGAGRGWCQTGDCGGVLECKGWGKPPNTLAEYALNQFSNLDFWDISVIDGFNIPMSFGPTKPGPGKCHGIQCTANINGECPGSLRVPGGCNNPCTTFGGQQYCCTQGPCGPTELSRWFKQRCPDAYSYPQDDPTSTFTCTSWTTDYKVMFCPYGSAHNETTNFPLEMPTSTHEVAK</sequence>
<evidence type="ECO:0000255" key="1"/>
<evidence type="ECO:0000255" key="2">
    <source>
        <dbReference type="PROSITE-ProRule" id="PRU00699"/>
    </source>
</evidence>
<evidence type="ECO:0000269" key="3">
    <source ref="2"/>
</evidence>
<evidence type="ECO:0007829" key="4">
    <source>
        <dbReference type="PDB" id="1AUN"/>
    </source>
</evidence>
<proteinExistence type="evidence at protein level"/>
<dbReference type="EMBL" id="M64081">
    <property type="protein sequence ID" value="AAA34087.1"/>
    <property type="molecule type" value="mRNA"/>
</dbReference>
<dbReference type="RefSeq" id="NP_001312513.1">
    <property type="nucleotide sequence ID" value="NM_001325584.1"/>
</dbReference>
<dbReference type="PDB" id="1AUN">
    <property type="method" value="X-ray"/>
    <property type="resolution" value="1.80 A"/>
    <property type="chains" value="A=22-229"/>
</dbReference>
<dbReference type="PDBsum" id="1AUN"/>
<dbReference type="SMR" id="P25871"/>
<dbReference type="STRING" id="4097.P25871"/>
<dbReference type="GlyCosmos" id="P25871">
    <property type="glycosylation" value="1 site, No reported glycans"/>
</dbReference>
<dbReference type="PaxDb" id="4097-P25871"/>
<dbReference type="GeneID" id="107794478"/>
<dbReference type="KEGG" id="nta:107794478"/>
<dbReference type="OMA" id="NCHRILC"/>
<dbReference type="OrthoDB" id="1211426at2759"/>
<dbReference type="EvolutionaryTrace" id="P25871"/>
<dbReference type="Proteomes" id="UP000084051">
    <property type="component" value="Unplaced"/>
</dbReference>
<dbReference type="GO" id="GO:0006952">
    <property type="term" value="P:defense response"/>
    <property type="evidence" value="ECO:0000318"/>
    <property type="project" value="GO_Central"/>
</dbReference>
<dbReference type="CDD" id="cd09217">
    <property type="entry name" value="TLP-P"/>
    <property type="match status" value="1"/>
</dbReference>
<dbReference type="FunFam" id="2.60.110.10:FF:000003">
    <property type="entry name" value="Thaumatin I"/>
    <property type="match status" value="1"/>
</dbReference>
<dbReference type="Gene3D" id="2.60.110.10">
    <property type="entry name" value="Thaumatin"/>
    <property type="match status" value="1"/>
</dbReference>
<dbReference type="InterPro" id="IPR037176">
    <property type="entry name" value="Osmotin/thaumatin-like_sf"/>
</dbReference>
<dbReference type="InterPro" id="IPR001938">
    <property type="entry name" value="Thaumatin"/>
</dbReference>
<dbReference type="InterPro" id="IPR017949">
    <property type="entry name" value="Thaumatin_CS"/>
</dbReference>
<dbReference type="PANTHER" id="PTHR31048">
    <property type="entry name" value="OS03G0233200 PROTEIN"/>
    <property type="match status" value="1"/>
</dbReference>
<dbReference type="Pfam" id="PF00314">
    <property type="entry name" value="Thaumatin"/>
    <property type="match status" value="1"/>
</dbReference>
<dbReference type="PIRSF" id="PIRSF002703">
    <property type="entry name" value="Thaumatin"/>
    <property type="match status" value="1"/>
</dbReference>
<dbReference type="PRINTS" id="PR00347">
    <property type="entry name" value="THAUMATIN"/>
</dbReference>
<dbReference type="SMART" id="SM00205">
    <property type="entry name" value="THN"/>
    <property type="match status" value="1"/>
</dbReference>
<dbReference type="SUPFAM" id="SSF49870">
    <property type="entry name" value="Osmotin, thaumatin-like protein"/>
    <property type="match status" value="1"/>
</dbReference>
<dbReference type="PROSITE" id="PS00316">
    <property type="entry name" value="THAUMATIN_1"/>
    <property type="match status" value="1"/>
</dbReference>
<dbReference type="PROSITE" id="PS51367">
    <property type="entry name" value="THAUMATIN_2"/>
    <property type="match status" value="1"/>
</dbReference>
<protein>
    <recommendedName>
        <fullName>Osmotin-like protein</fullName>
    </recommendedName>
    <alternativeName>
        <fullName>Pathogenesis-related protein PR-5d</fullName>
    </alternativeName>
</protein>
<organism>
    <name type="scientific">Nicotiana tabacum</name>
    <name type="common">Common tobacco</name>
    <dbReference type="NCBI Taxonomy" id="4097"/>
    <lineage>
        <taxon>Eukaryota</taxon>
        <taxon>Viridiplantae</taxon>
        <taxon>Streptophyta</taxon>
        <taxon>Embryophyta</taxon>
        <taxon>Tracheophyta</taxon>
        <taxon>Spermatophyta</taxon>
        <taxon>Magnoliopsida</taxon>
        <taxon>eudicotyledons</taxon>
        <taxon>Gunneridae</taxon>
        <taxon>Pentapetalae</taxon>
        <taxon>asterids</taxon>
        <taxon>lamiids</taxon>
        <taxon>Solanales</taxon>
        <taxon>Solanaceae</taxon>
        <taxon>Nicotianoideae</taxon>
        <taxon>Nicotianeae</taxon>
        <taxon>Nicotiana</taxon>
    </lineage>
</organism>
<feature type="signal peptide" evidence="3">
    <location>
        <begin position="1"/>
        <end position="21"/>
    </location>
</feature>
<feature type="chain" id="PRO_0000034042" description="Osmotin-like protein">
    <location>
        <begin position="22"/>
        <end position="251"/>
    </location>
</feature>
<feature type="glycosylation site" description="N-linked (GlcNAc...) asparagine" evidence="1">
    <location>
        <position position="233"/>
    </location>
</feature>
<feature type="disulfide bond">
    <location>
        <begin position="31"/>
        <end position="226"/>
    </location>
</feature>
<feature type="disulfide bond">
    <location>
        <begin position="73"/>
        <end position="83"/>
    </location>
</feature>
<feature type="disulfide bond">
    <location>
        <begin position="88"/>
        <end position="94"/>
    </location>
</feature>
<feature type="disulfide bond">
    <location>
        <begin position="142"/>
        <end position="214"/>
    </location>
</feature>
<feature type="disulfide bond">
    <location>
        <begin position="147"/>
        <end position="197"/>
    </location>
</feature>
<feature type="disulfide bond">
    <location>
        <begin position="155"/>
        <end position="165"/>
    </location>
</feature>
<feature type="disulfide bond">
    <location>
        <begin position="169"/>
        <end position="178"/>
    </location>
</feature>
<feature type="disulfide bond">
    <location>
        <begin position="179"/>
        <end position="184"/>
    </location>
</feature>
<feature type="strand" evidence="4">
    <location>
        <begin position="24"/>
        <end position="29"/>
    </location>
</feature>
<feature type="strand" evidence="4">
    <location>
        <begin position="31"/>
        <end position="33"/>
    </location>
</feature>
<feature type="strand" evidence="4">
    <location>
        <begin position="35"/>
        <end position="40"/>
    </location>
</feature>
<feature type="turn" evidence="4">
    <location>
        <begin position="41"/>
        <end position="43"/>
    </location>
</feature>
<feature type="strand" evidence="4">
    <location>
        <begin position="44"/>
        <end position="48"/>
    </location>
</feature>
<feature type="strand" evidence="4">
    <location>
        <begin position="53"/>
        <end position="57"/>
    </location>
</feature>
<feature type="strand" evidence="4">
    <location>
        <begin position="64"/>
        <end position="75"/>
    </location>
</feature>
<feature type="strand" evidence="4">
    <location>
        <begin position="79"/>
        <end position="86"/>
    </location>
</feature>
<feature type="strand" evidence="4">
    <location>
        <begin position="91"/>
        <end position="93"/>
    </location>
</feature>
<feature type="strand" evidence="4">
    <location>
        <begin position="104"/>
        <end position="111"/>
    </location>
</feature>
<feature type="helix" evidence="4">
    <location>
        <begin position="112"/>
        <end position="114"/>
    </location>
</feature>
<feature type="strand" evidence="4">
    <location>
        <begin position="115"/>
        <end position="121"/>
    </location>
</feature>
<feature type="strand" evidence="4">
    <location>
        <begin position="126"/>
        <end position="128"/>
    </location>
</feature>
<feature type="strand" evidence="4">
    <location>
        <begin position="130"/>
        <end position="136"/>
    </location>
</feature>
<feature type="strand" evidence="4">
    <location>
        <begin position="145"/>
        <end position="147"/>
    </location>
</feature>
<feature type="helix" evidence="4">
    <location>
        <begin position="151"/>
        <end position="154"/>
    </location>
</feature>
<feature type="turn" evidence="4">
    <location>
        <begin position="157"/>
        <end position="159"/>
    </location>
</feature>
<feature type="helix" evidence="4">
    <location>
        <begin position="168"/>
        <end position="171"/>
    </location>
</feature>
<feature type="helix" evidence="4">
    <location>
        <begin position="175"/>
        <end position="178"/>
    </location>
</feature>
<feature type="helix" evidence="4">
    <location>
        <begin position="188"/>
        <end position="196"/>
    </location>
</feature>
<feature type="turn" evidence="4">
    <location>
        <begin position="208"/>
        <end position="210"/>
    </location>
</feature>
<feature type="strand" evidence="4">
    <location>
        <begin position="212"/>
        <end position="215"/>
    </location>
</feature>
<feature type="strand" evidence="4">
    <location>
        <begin position="221"/>
        <end position="226"/>
    </location>
</feature>
<name>OLPA_TOBAC</name>
<comment type="induction">
    <text>By tobacco mosaic virus infection and wounding.</text>
</comment>
<comment type="similarity">
    <text evidence="2">Belongs to the thaumatin family.</text>
</comment>
<reference key="1">
    <citation type="journal article" date="1991" name="Plant Physiol.">
        <title>Nucleotide sequence of a cDNA for osmotin-like protein from cultured tobacco cells.</title>
        <authorList>
            <person name="Takeda S."/>
            <person name="Sato F."/>
            <person name="Ida K."/>
            <person name="Yamada Y."/>
        </authorList>
    </citation>
    <scope>NUCLEOTIDE SEQUENCE [MRNA]</scope>
    <source>
        <strain>cv. Samsun NN</strain>
    </source>
</reference>
<reference key="2">
    <citation type="journal article" date="1990" name="Plant Cell Physiol.">
        <title>Characterization of polypeptides that accumulate in cultured Nicotiana tabacum cells.</title>
        <authorList>
            <person name="Takeda S."/>
            <person name="Sato F."/>
            <person name="Ida K."/>
            <person name="Yamada Y."/>
        </authorList>
    </citation>
    <scope>PROTEIN SEQUENCE OF 22-60</scope>
</reference>
<reference key="3">
    <citation type="journal article" date="1997" name="Plant Cell Physiol.">
        <title>Purification and characterization of tobacco pathogenesis-related protein PR-5d, an antifungal thaumatin-like protein.</title>
        <authorList>
            <person name="Koiwa H."/>
            <person name="Kato H."/>
            <person name="Nakatsu T."/>
            <person name="Oda J."/>
            <person name="Yamada Y."/>
            <person name="Sato F."/>
        </authorList>
    </citation>
    <scope>CHARACTERIZATION</scope>
    <scope>CRYSTALLIZATION</scope>
    <source>
        <strain>cv. Samsun NN</strain>
    </source>
</reference>
<reference key="4">
    <citation type="journal article" date="1999" name="J. Mol. Biol.">
        <title>Crystal structure of tobacco PR-5d protein at 1.8-A resolution reveals a conserved acidic cleft structure in antifungal thaumatin-like proteins.</title>
        <authorList>
            <person name="Koiwa H."/>
            <person name="Kato H."/>
            <person name="Nakatsu T."/>
            <person name="Oda J."/>
            <person name="Yamada Y."/>
            <person name="Sato F."/>
        </authorList>
    </citation>
    <scope>X-RAY CRYSTALLOGRAPHY (1.8 ANGSTROMS) OF 22-229</scope>
    <source>
        <strain>cv. Samsun NN</strain>
    </source>
</reference>
<accession>P25871</accession>
<gene>
    <name type="primary">OLPA</name>
    <name type="synonym">OLP1</name>
</gene>
<keyword id="KW-0002">3D-structure</keyword>
<keyword id="KW-0903">Direct protein sequencing</keyword>
<keyword id="KW-1015">Disulfide bond</keyword>
<keyword id="KW-0325">Glycoprotein</keyword>
<keyword id="KW-0568">Pathogenesis-related protein</keyword>
<keyword id="KW-0611">Plant defense</keyword>
<keyword id="KW-1185">Reference proteome</keyword>
<keyword id="KW-0732">Signal</keyword>